<gene>
    <name type="primary">yscK</name>
</gene>
<dbReference type="EMBL" id="M74011">
    <property type="protein sequence ID" value="AAC37028.1"/>
    <property type="molecule type" value="Genomic_DNA"/>
</dbReference>
<dbReference type="PIR" id="B40049">
    <property type="entry name" value="B40049"/>
</dbReference>
<dbReference type="RefSeq" id="WP_010891232.1">
    <property type="nucleotide sequence ID" value="NZ_KN150737.1"/>
</dbReference>
<dbReference type="SMR" id="Q01252"/>
<dbReference type="IntAct" id="Q01252">
    <property type="interactions" value="1"/>
</dbReference>
<dbReference type="GeneID" id="31412278"/>
<dbReference type="KEGG" id="yet:CH48_4192"/>
<dbReference type="InterPro" id="IPR009510">
    <property type="entry name" value="T3SS_K"/>
</dbReference>
<dbReference type="Pfam" id="PF06578">
    <property type="entry name" value="YscK"/>
    <property type="match status" value="1"/>
</dbReference>
<proteinExistence type="evidence at protein level"/>
<geneLocation type="plasmid">
    <name>pYV</name>
</geneLocation>
<reference key="1">
    <citation type="journal article" date="1991" name="J. Bacteriol.">
        <title>Analysis of virC, an operon involved in the secretion of Yop proteins by Yersinia enterocolitica.</title>
        <authorList>
            <person name="Michiels T."/>
            <person name="Vanooteghem J.-C."/>
            <person name="de Rouvroit C."/>
            <person name="China B."/>
            <person name="Gustin A."/>
            <person name="Boudry P."/>
            <person name="Cornelis G.R."/>
        </authorList>
    </citation>
    <scope>NUCLEOTIDE SEQUENCE [GENOMIC DNA]</scope>
    <source>
        <strain>439-80 / Serotype O:9</strain>
    </source>
</reference>
<sequence length="209" mass="23998">MMENYITSFQLRFCPAAYLHLEQLPSLWRSILPYLPQWRDSAHLNAALLDEFSLDTDYEEPHGLGALPLQPQSQLELLLCRLGLVLHGEAIRRCVLASPLQQLLTLVNQETLRQIIVQHELLIGPWPTNWQRPLPTEIESRTMIQSGLAFWLAAMEPQPQAWCKRLSLRLPLATPSEPWLVAESQRPLAQTLCHKLVKQVMPTCSHLFK</sequence>
<comment type="function">
    <text>Belongs to an operon involved in the translocation of Yop proteins across the bacterial membranes or in the specific control of this function.</text>
</comment>
<comment type="interaction">
    <interactant intactId="EBI-6508920">
        <id>Q01252</id>
    </interactant>
    <interactant intactId="EBI-6403263">
        <id>Q56844</id>
        <label>yscU</label>
    </interactant>
    <organismsDiffer>true</organismsDiffer>
    <experiments>2</experiments>
</comment>
<comment type="induction">
    <text>At 37 degrees Celsius in the absence of calcium.</text>
</comment>
<accession>Q01252</accession>
<feature type="chain" id="PRO_0000066489" description="Yop proteins translocation protein K">
    <location>
        <begin position="1"/>
        <end position="209"/>
    </location>
</feature>
<keyword id="KW-0614">Plasmid</keyword>
<keyword id="KW-0843">Virulence</keyword>
<protein>
    <recommendedName>
        <fullName>Yop proteins translocation protein K</fullName>
    </recommendedName>
</protein>
<name>YSCK_YEREN</name>
<organism>
    <name type="scientific">Yersinia enterocolitica</name>
    <dbReference type="NCBI Taxonomy" id="630"/>
    <lineage>
        <taxon>Bacteria</taxon>
        <taxon>Pseudomonadati</taxon>
        <taxon>Pseudomonadota</taxon>
        <taxon>Gammaproteobacteria</taxon>
        <taxon>Enterobacterales</taxon>
        <taxon>Yersiniaceae</taxon>
        <taxon>Yersinia</taxon>
    </lineage>
</organism>